<organism>
    <name type="scientific">Salmonella schwarzengrund (strain CVM19633)</name>
    <dbReference type="NCBI Taxonomy" id="439843"/>
    <lineage>
        <taxon>Bacteria</taxon>
        <taxon>Pseudomonadati</taxon>
        <taxon>Pseudomonadota</taxon>
        <taxon>Gammaproteobacteria</taxon>
        <taxon>Enterobacterales</taxon>
        <taxon>Enterobacteriaceae</taxon>
        <taxon>Salmonella</taxon>
    </lineage>
</organism>
<name>RAVA_SALSV</name>
<evidence type="ECO:0000255" key="1">
    <source>
        <dbReference type="HAMAP-Rule" id="MF_01625"/>
    </source>
</evidence>
<feature type="chain" id="PRO_1000186136" description="Regulatory ATPase RavA">
    <location>
        <begin position="1"/>
        <end position="498"/>
    </location>
</feature>
<feature type="binding site" evidence="1">
    <location>
        <position position="23"/>
    </location>
    <ligand>
        <name>ADP</name>
        <dbReference type="ChEBI" id="CHEBI:456216"/>
    </ligand>
</feature>
<feature type="binding site" evidence="1">
    <location>
        <position position="49"/>
    </location>
    <ligand>
        <name>ADP</name>
        <dbReference type="ChEBI" id="CHEBI:456216"/>
    </ligand>
</feature>
<feature type="binding site" evidence="1">
    <location>
        <position position="50"/>
    </location>
    <ligand>
        <name>ADP</name>
        <dbReference type="ChEBI" id="CHEBI:456216"/>
    </ligand>
</feature>
<feature type="binding site" evidence="1">
    <location>
        <position position="51"/>
    </location>
    <ligand>
        <name>ADP</name>
        <dbReference type="ChEBI" id="CHEBI:456216"/>
    </ligand>
</feature>
<feature type="binding site" evidence="1">
    <location>
        <position position="52"/>
    </location>
    <ligand>
        <name>ADP</name>
        <dbReference type="ChEBI" id="CHEBI:456216"/>
    </ligand>
</feature>
<feature type="binding site" evidence="1">
    <location>
        <position position="53"/>
    </location>
    <ligand>
        <name>ADP</name>
        <dbReference type="ChEBI" id="CHEBI:456216"/>
    </ligand>
</feature>
<feature type="binding site" evidence="1">
    <location>
        <position position="54"/>
    </location>
    <ligand>
        <name>ADP</name>
        <dbReference type="ChEBI" id="CHEBI:456216"/>
    </ligand>
</feature>
<feature type="binding site" evidence="1">
    <location>
        <position position="196"/>
    </location>
    <ligand>
        <name>ADP</name>
        <dbReference type="ChEBI" id="CHEBI:456216"/>
    </ligand>
</feature>
<gene>
    <name evidence="1" type="primary">ravA</name>
    <name type="ordered locus">SeSA_A4091</name>
</gene>
<proteinExistence type="inferred from homology"/>
<reference key="1">
    <citation type="journal article" date="2011" name="J. Bacteriol.">
        <title>Comparative genomics of 28 Salmonella enterica isolates: evidence for CRISPR-mediated adaptive sublineage evolution.</title>
        <authorList>
            <person name="Fricke W.F."/>
            <person name="Mammel M.K."/>
            <person name="McDermott P.F."/>
            <person name="Tartera C."/>
            <person name="White D.G."/>
            <person name="Leclerc J.E."/>
            <person name="Ravel J."/>
            <person name="Cebula T.A."/>
        </authorList>
    </citation>
    <scope>NUCLEOTIDE SEQUENCE [LARGE SCALE GENOMIC DNA]</scope>
    <source>
        <strain>CVM19633</strain>
    </source>
</reference>
<keyword id="KW-0067">ATP-binding</keyword>
<keyword id="KW-0143">Chaperone</keyword>
<keyword id="KW-0963">Cytoplasm</keyword>
<keyword id="KW-0378">Hydrolase</keyword>
<keyword id="KW-0547">Nucleotide-binding</keyword>
<protein>
    <recommendedName>
        <fullName evidence="1">Regulatory ATPase RavA</fullName>
        <ecNumber evidence="1">3.6.1.-</ecNumber>
    </recommendedName>
    <alternativeName>
        <fullName evidence="1">Regulatory ATPase variant A</fullName>
    </alternativeName>
</protein>
<dbReference type="EC" id="3.6.1.-" evidence="1"/>
<dbReference type="EMBL" id="CP001127">
    <property type="protein sequence ID" value="ACF92062.1"/>
    <property type="molecule type" value="Genomic_DNA"/>
</dbReference>
<dbReference type="RefSeq" id="WP_000940983.1">
    <property type="nucleotide sequence ID" value="NC_011094.1"/>
</dbReference>
<dbReference type="SMR" id="B4TN47"/>
<dbReference type="KEGG" id="sew:SeSA_A4091"/>
<dbReference type="HOGENOM" id="CLU_018678_1_0_6"/>
<dbReference type="Proteomes" id="UP000001865">
    <property type="component" value="Chromosome"/>
</dbReference>
<dbReference type="GO" id="GO:0005737">
    <property type="term" value="C:cytoplasm"/>
    <property type="evidence" value="ECO:0007669"/>
    <property type="project" value="UniProtKB-SubCell"/>
</dbReference>
<dbReference type="GO" id="GO:0005524">
    <property type="term" value="F:ATP binding"/>
    <property type="evidence" value="ECO:0007669"/>
    <property type="project" value="UniProtKB-KW"/>
</dbReference>
<dbReference type="GO" id="GO:0016887">
    <property type="term" value="F:ATP hydrolysis activity"/>
    <property type="evidence" value="ECO:0007669"/>
    <property type="project" value="UniProtKB-UniRule"/>
</dbReference>
<dbReference type="CDD" id="cd00009">
    <property type="entry name" value="AAA"/>
    <property type="match status" value="1"/>
</dbReference>
<dbReference type="FunFam" id="3.40.50.300:FF:000410">
    <property type="entry name" value="ATPase RavA"/>
    <property type="match status" value="1"/>
</dbReference>
<dbReference type="Gene3D" id="1.20.58.1510">
    <property type="match status" value="1"/>
</dbReference>
<dbReference type="Gene3D" id="2.40.128.430">
    <property type="match status" value="1"/>
</dbReference>
<dbReference type="Gene3D" id="3.40.50.300">
    <property type="entry name" value="P-loop containing nucleotide triphosphate hydrolases"/>
    <property type="match status" value="1"/>
</dbReference>
<dbReference type="HAMAP" id="MF_01625">
    <property type="entry name" value="ATPase_RavA"/>
    <property type="match status" value="1"/>
</dbReference>
<dbReference type="InterPro" id="IPR003593">
    <property type="entry name" value="AAA+_ATPase"/>
</dbReference>
<dbReference type="InterPro" id="IPR023671">
    <property type="entry name" value="ATPase_RavA"/>
</dbReference>
<dbReference type="InterPro" id="IPR022547">
    <property type="entry name" value="ATPase_RavA_C"/>
</dbReference>
<dbReference type="InterPro" id="IPR045427">
    <property type="entry name" value="MoxR"/>
</dbReference>
<dbReference type="InterPro" id="IPR027417">
    <property type="entry name" value="P-loop_NTPase"/>
</dbReference>
<dbReference type="InterPro" id="IPR041538">
    <property type="entry name" value="RavA-like_AAA_lid"/>
</dbReference>
<dbReference type="InterPro" id="IPR050513">
    <property type="entry name" value="RavA_ATPases"/>
</dbReference>
<dbReference type="InterPro" id="IPR046898">
    <property type="entry name" value="RavA_LARA_dom"/>
</dbReference>
<dbReference type="InterPro" id="IPR046932">
    <property type="entry name" value="RavA_LARA_sf"/>
</dbReference>
<dbReference type="NCBIfam" id="NF010054">
    <property type="entry name" value="PRK13531.1"/>
    <property type="match status" value="1"/>
</dbReference>
<dbReference type="PANTHER" id="PTHR32204">
    <property type="entry name" value="ATPASE RAVA"/>
    <property type="match status" value="1"/>
</dbReference>
<dbReference type="PANTHER" id="PTHR32204:SF0">
    <property type="entry name" value="ATPASE RAVA"/>
    <property type="match status" value="1"/>
</dbReference>
<dbReference type="Pfam" id="PF17868">
    <property type="entry name" value="AAA_lid_8"/>
    <property type="match status" value="1"/>
</dbReference>
<dbReference type="Pfam" id="PF12592">
    <property type="entry name" value="ATPase_RavA_C"/>
    <property type="match status" value="1"/>
</dbReference>
<dbReference type="Pfam" id="PF20030">
    <property type="entry name" value="bpMoxR"/>
    <property type="match status" value="1"/>
</dbReference>
<dbReference type="Pfam" id="PF20265">
    <property type="entry name" value="LARA_dom"/>
    <property type="match status" value="1"/>
</dbReference>
<dbReference type="SMART" id="SM00382">
    <property type="entry name" value="AAA"/>
    <property type="match status" value="1"/>
</dbReference>
<dbReference type="SUPFAM" id="SSF52540">
    <property type="entry name" value="P-loop containing nucleoside triphosphate hydrolases"/>
    <property type="match status" value="1"/>
</dbReference>
<comment type="function">
    <text evidence="1">Component of the RavA-ViaA chaperone complex, which may act on the membrane to optimize the function of some of the respiratory chains. RavA functions as an ATPase.</text>
</comment>
<comment type="catalytic activity">
    <reaction evidence="1">
        <text>ATP + H2O = ADP + phosphate + H(+)</text>
        <dbReference type="Rhea" id="RHEA:13065"/>
        <dbReference type="ChEBI" id="CHEBI:15377"/>
        <dbReference type="ChEBI" id="CHEBI:15378"/>
        <dbReference type="ChEBI" id="CHEBI:30616"/>
        <dbReference type="ChEBI" id="CHEBI:43474"/>
        <dbReference type="ChEBI" id="CHEBI:456216"/>
    </reaction>
</comment>
<comment type="activity regulation">
    <text evidence="1">ATPase activity is stimulated by ViaA.</text>
</comment>
<comment type="subunit">
    <text evidence="1">Homohexamer. Interacts with ViaA.</text>
</comment>
<comment type="subcellular location">
    <subcellularLocation>
        <location evidence="1">Cytoplasm</location>
    </subcellularLocation>
</comment>
<comment type="similarity">
    <text evidence="1">Belongs to the RavA family.</text>
</comment>
<sequence>MAHPHLLAERISRLSSALEKGLYERSHAIRLCLLAALSGESVFLLGPPGIAKSLIARRLKFAFQRARAFEYLMTRFSTPEEVFGPLSIQALKDEGRYERLTTGYLPEAEIVFLDEIWKAGPAILNTLLTAINERHFRNGAFEEKIPMRLLVAASNELPEADSSLEALYDRMLIRLWLDKVQDKANFRSMLVNQQDESDNPVPASLQVSDEEYQQWQKDIGAISLPDPIFELIFTLRQQLDNLPNAPYVSDRRWKKAIRLLQASAFFSGRDAVAPIDLILLKDCLWYDAQSLNLMQQQLEILMTGHAWQQQAMLTRLGGIVQRRLQLQQQQSDKTAFTVIKEGGMFSRRPHYTLPPEASASTLTLLLQKPLKLHDMEVIHITFDRSALELWLTKGGEIRGKLNGIGFAQTLNMEVDNAQHLVVRDISLQGTRLALPGAAEDSMPAEIKQQLETLENDWRQQHTRFSEQQHCLFIHSDWLGRIEASLQDVGEQIRQAQQC</sequence>
<accession>B4TN47</accession>